<feature type="chain" id="PRO_1000146242" description="Adenine deaminase">
    <location>
        <begin position="1"/>
        <end position="551"/>
    </location>
</feature>
<proteinExistence type="inferred from homology"/>
<keyword id="KW-0378">Hydrolase</keyword>
<keyword id="KW-0464">Manganese</keyword>
<keyword id="KW-1185">Reference proteome</keyword>
<reference key="1">
    <citation type="journal article" date="2008" name="J. Bacteriol.">
        <title>Complete genome sequence of Leuconostoc citreum KM20.</title>
        <authorList>
            <person name="Kim J.F."/>
            <person name="Jeong H."/>
            <person name="Lee J.-S."/>
            <person name="Choi S.-H."/>
            <person name="Ha M."/>
            <person name="Hur C.-G."/>
            <person name="Kim J.-S."/>
            <person name="Lee S."/>
            <person name="Park H.-S."/>
            <person name="Park Y.-H."/>
            <person name="Oh T.K."/>
        </authorList>
    </citation>
    <scope>NUCLEOTIDE SEQUENCE [LARGE SCALE GENOMIC DNA]</scope>
    <source>
        <strain>KM20</strain>
    </source>
</reference>
<organism>
    <name type="scientific">Leuconostoc citreum (strain KM20)</name>
    <dbReference type="NCBI Taxonomy" id="349519"/>
    <lineage>
        <taxon>Bacteria</taxon>
        <taxon>Bacillati</taxon>
        <taxon>Bacillota</taxon>
        <taxon>Bacilli</taxon>
        <taxon>Lactobacillales</taxon>
        <taxon>Lactobacillaceae</taxon>
        <taxon>Leuconostoc</taxon>
    </lineage>
</organism>
<accession>B1MY57</accession>
<evidence type="ECO:0000255" key="1">
    <source>
        <dbReference type="HAMAP-Rule" id="MF_01518"/>
    </source>
</evidence>
<protein>
    <recommendedName>
        <fullName evidence="1">Adenine deaminase</fullName>
        <shortName evidence="1">Adenase</shortName>
        <shortName evidence="1">Adenine aminase</shortName>
        <ecNumber evidence="1">3.5.4.2</ecNumber>
    </recommendedName>
</protein>
<gene>
    <name evidence="1" type="primary">ade</name>
    <name type="ordered locus">LCK_00627</name>
</gene>
<name>ADEC_LEUCK</name>
<dbReference type="EC" id="3.5.4.2" evidence="1"/>
<dbReference type="EMBL" id="DQ489736">
    <property type="protein sequence ID" value="ACA82459.1"/>
    <property type="molecule type" value="Genomic_DNA"/>
</dbReference>
<dbReference type="RefSeq" id="WP_004907287.1">
    <property type="nucleotide sequence ID" value="NC_010471.1"/>
</dbReference>
<dbReference type="SMR" id="B1MY57"/>
<dbReference type="STRING" id="349519.LCK_00627"/>
<dbReference type="KEGG" id="lci:LCK_00627"/>
<dbReference type="eggNOG" id="COG1001">
    <property type="taxonomic scope" value="Bacteria"/>
</dbReference>
<dbReference type="HOGENOM" id="CLU_027935_0_0_9"/>
<dbReference type="OrthoDB" id="9775607at2"/>
<dbReference type="Proteomes" id="UP000002166">
    <property type="component" value="Chromosome"/>
</dbReference>
<dbReference type="GO" id="GO:0000034">
    <property type="term" value="F:adenine deaminase activity"/>
    <property type="evidence" value="ECO:0007669"/>
    <property type="project" value="UniProtKB-UniRule"/>
</dbReference>
<dbReference type="GO" id="GO:0006146">
    <property type="term" value="P:adenine catabolic process"/>
    <property type="evidence" value="ECO:0007669"/>
    <property type="project" value="InterPro"/>
</dbReference>
<dbReference type="CDD" id="cd01295">
    <property type="entry name" value="AdeC"/>
    <property type="match status" value="1"/>
</dbReference>
<dbReference type="Gene3D" id="3.20.20.140">
    <property type="entry name" value="Metal-dependent hydrolases"/>
    <property type="match status" value="1"/>
</dbReference>
<dbReference type="Gene3D" id="2.30.40.10">
    <property type="entry name" value="Urease, subunit C, domain 1"/>
    <property type="match status" value="1"/>
</dbReference>
<dbReference type="HAMAP" id="MF_01518">
    <property type="entry name" value="Adenine_deamin"/>
    <property type="match status" value="1"/>
</dbReference>
<dbReference type="InterPro" id="IPR006679">
    <property type="entry name" value="Adenine_deam"/>
</dbReference>
<dbReference type="InterPro" id="IPR026912">
    <property type="entry name" value="Adenine_deam_C"/>
</dbReference>
<dbReference type="InterPro" id="IPR006680">
    <property type="entry name" value="Amidohydro-rel"/>
</dbReference>
<dbReference type="InterPro" id="IPR011059">
    <property type="entry name" value="Metal-dep_hydrolase_composite"/>
</dbReference>
<dbReference type="InterPro" id="IPR032466">
    <property type="entry name" value="Metal_Hydrolase"/>
</dbReference>
<dbReference type="NCBIfam" id="TIGR01178">
    <property type="entry name" value="ade"/>
    <property type="match status" value="1"/>
</dbReference>
<dbReference type="PANTHER" id="PTHR11113:SF2">
    <property type="entry name" value="ADENINE DEAMINASE"/>
    <property type="match status" value="1"/>
</dbReference>
<dbReference type="PANTHER" id="PTHR11113">
    <property type="entry name" value="N-ACETYLGLUCOSAMINE-6-PHOSPHATE DEACETYLASE"/>
    <property type="match status" value="1"/>
</dbReference>
<dbReference type="Pfam" id="PF13382">
    <property type="entry name" value="Adenine_deam_C"/>
    <property type="match status" value="1"/>
</dbReference>
<dbReference type="Pfam" id="PF01979">
    <property type="entry name" value="Amidohydro_1"/>
    <property type="match status" value="1"/>
</dbReference>
<dbReference type="SUPFAM" id="SSF51338">
    <property type="entry name" value="Composite domain of metallo-dependent hydrolases"/>
    <property type="match status" value="1"/>
</dbReference>
<dbReference type="SUPFAM" id="SSF51556">
    <property type="entry name" value="Metallo-dependent hydrolases"/>
    <property type="match status" value="1"/>
</dbReference>
<comment type="catalytic activity">
    <reaction evidence="1">
        <text>adenine + H2O + H(+) = hypoxanthine + NH4(+)</text>
        <dbReference type="Rhea" id="RHEA:23688"/>
        <dbReference type="ChEBI" id="CHEBI:15377"/>
        <dbReference type="ChEBI" id="CHEBI:15378"/>
        <dbReference type="ChEBI" id="CHEBI:16708"/>
        <dbReference type="ChEBI" id="CHEBI:17368"/>
        <dbReference type="ChEBI" id="CHEBI:28938"/>
        <dbReference type="EC" id="3.5.4.2"/>
    </reaction>
</comment>
<comment type="cofactor">
    <cofactor evidence="1">
        <name>Mn(2+)</name>
        <dbReference type="ChEBI" id="CHEBI:29035"/>
    </cofactor>
</comment>
<comment type="similarity">
    <text evidence="1">Belongs to the metallo-dependent hydrolases superfamily. Adenine deaminase family.</text>
</comment>
<sequence length="551" mass="60470">MAKTVSWHIINAKILDVFNLTFETSELWIDHDKIVYRGRRSDLQAQHTFDAQGQYIVPGLIDAHMHIESSLLAPSEFSKLVVPHGITRVIADPHEIASVAGVSGIQYMLEEARQSQLHIHYMLPSSVPATPFEHAGATLHADALKPFYSVPEVNGLAEVMDFPAVFNEDEDMHQKISDSQAAGKHVDGHASGLSREQLAIYRKYGIDTDHESENAQQARDRLNAGFSVFVREGTVERDESAILPAISVANQAHFSFATDDKTANDIQHEGAIDFNVKLAIQSGMSPAMAFTIASYNAATAHRLDNVGALTDGYVADLVIIDSLDDFNIKKVMISGQWYVEPETTVLPLANQSLNFTLTVDDLKLPINDKKPAHVIEIMPHHITTTHLVEDVPSQEGLFVADKTYTKIVVAERYHNLGHGVGIIKGFQMTDGAIASTIAHDSHNIIIAGTNDEDMLLAANKLREIGGGEVVVNNGQITTLPLAIGGLMSEQSYTTVIQENNTLQAAFSKISHLNFDPFLTLSFMALPVIPSLKITDQGLFDFNTFSFINIQD</sequence>